<comment type="function">
    <text evidence="1 3">Subunit 8, of the mitochondrial membrane ATP synthase complex (F(1)F(0) ATP synthase or Complex V) that produces ATP from ADP in the presence of a proton gradient across the membrane which is generated by electron transport complexes of the respiratory chain. ATP synthase complex consist of a soluble F(1) head domain - the catalytic core - and a membrane F(1) domain - the membrane proton channel. These two domains are linked by a central stalk rotating inside the F(1) region and a stationary peripheral stalk. During catalysis, ATP synthesis in the catalytic domain of F(1) is coupled via a rotary mechanism of the central stalk subunits to proton translocation (By similarity). In vivo, can only synthesize ATP although its ATP hydrolase activity can be activated artificially in vitro (By similarity). Part of the complex F(0) domain (By similarity).</text>
</comment>
<comment type="subunit">
    <text evidence="1">Component of the ATP synthase complex composed at least of ATP5F1A/subunit alpha, ATP5F1B/subunit beta, ATP5MC1/subunit c (homooctomer), MT-ATP6/subunit a, MT-ATP8/subunit 8, ATP5ME/subunit e, ATP5MF/subunit f, ATP5MG/subunit g, ATP5MK/subunit k, ATP5MJ/subunit j, ATP5F1C/subunit gamma, ATP5F1D/subunit delta, ATP5F1E/subunit epsilon, ATP5PF/subunit F6, ATP5PB/subunit b, ATP5PD/subunit d, ATP5PO/subunit OSCP. ATP synthase complex consists of a soluble F(1) head domain (subunits alpha(3) and beta(3)) - the catalytic core - and a membrane F(0) domain - the membrane proton channel (subunits c, a, 8, e, f, g, k and j). These two domains are linked by a central stalk (subunits gamma, delta, and epsilon) rotating inside the F1 region and a stationary peripheral stalk (subunits F6, b, d, and OSCP). Interacts with PRICKLE3.</text>
</comment>
<comment type="subcellular location">
    <subcellularLocation>
        <location>Mitochondrion membrane</location>
        <topology>Single-pass membrane protein</topology>
    </subcellularLocation>
</comment>
<comment type="similarity">
    <text evidence="5">Belongs to the ATPase protein 8 family.</text>
</comment>
<accession>Q2I3H0</accession>
<sequence length="66" mass="7893">MERMDIIIWLLAVVIVLTTLMIFLHLKTLKIIRLLFPISKELSKKSCVFPWKKKWTKNYPPSSMYP</sequence>
<geneLocation type="mitochondrion"/>
<evidence type="ECO:0000250" key="1">
    <source>
        <dbReference type="UniProtKB" id="P03928"/>
    </source>
</evidence>
<evidence type="ECO:0000250" key="2">
    <source>
        <dbReference type="UniProtKB" id="P03930"/>
    </source>
</evidence>
<evidence type="ECO:0000250" key="3">
    <source>
        <dbReference type="UniProtKB" id="P19483"/>
    </source>
</evidence>
<evidence type="ECO:0000255" key="4"/>
<evidence type="ECO:0000305" key="5"/>
<organism>
    <name type="scientific">Elephas maximus</name>
    <name type="common">Indian elephant</name>
    <dbReference type="NCBI Taxonomy" id="9783"/>
    <lineage>
        <taxon>Eukaryota</taxon>
        <taxon>Metazoa</taxon>
        <taxon>Chordata</taxon>
        <taxon>Craniata</taxon>
        <taxon>Vertebrata</taxon>
        <taxon>Euteleostomi</taxon>
        <taxon>Mammalia</taxon>
        <taxon>Eutheria</taxon>
        <taxon>Afrotheria</taxon>
        <taxon>Proboscidea</taxon>
        <taxon>Elephantidae</taxon>
        <taxon>Elephas</taxon>
    </lineage>
</organism>
<dbReference type="EMBL" id="DQ316068">
    <property type="protein sequence ID" value="ABC17895.1"/>
    <property type="molecule type" value="Genomic_DNA"/>
</dbReference>
<dbReference type="RefSeq" id="YP_626371.1">
    <property type="nucleotide sequence ID" value="NC_005129.2"/>
</dbReference>
<dbReference type="GeneID" id="2610362"/>
<dbReference type="CTD" id="4509"/>
<dbReference type="GO" id="GO:0031966">
    <property type="term" value="C:mitochondrial membrane"/>
    <property type="evidence" value="ECO:0007669"/>
    <property type="project" value="UniProtKB-SubCell"/>
</dbReference>
<dbReference type="GO" id="GO:0045259">
    <property type="term" value="C:proton-transporting ATP synthase complex"/>
    <property type="evidence" value="ECO:0000250"/>
    <property type="project" value="UniProtKB"/>
</dbReference>
<dbReference type="GO" id="GO:0006754">
    <property type="term" value="P:ATP biosynthetic process"/>
    <property type="evidence" value="ECO:0007669"/>
    <property type="project" value="UniProtKB-KW"/>
</dbReference>
<dbReference type="GO" id="GO:1902600">
    <property type="term" value="P:proton transmembrane transport"/>
    <property type="evidence" value="ECO:0007669"/>
    <property type="project" value="UniProtKB-KW"/>
</dbReference>
<name>ATP8_ELEMA</name>
<reference key="1">
    <citation type="journal article" date="2006" name="PLoS Biol.">
        <title>Complete mitochondrial genome and phylogeny of Pleistocene mammoth Mammuthus primigenius.</title>
        <authorList>
            <person name="Rogaev E.I."/>
            <person name="Moliaka Y.K."/>
            <person name="Malyarchuk B.A."/>
            <person name="Kondrashov F.A."/>
            <person name="Derenko M.V."/>
            <person name="Chumakov I."/>
            <person name="Grigorenko A.P."/>
        </authorList>
    </citation>
    <scope>NUCLEOTIDE SEQUENCE [GENOMIC DNA]</scope>
    <source>
        <tissue>Blood</tissue>
    </source>
</reference>
<protein>
    <recommendedName>
        <fullName evidence="1">ATP synthase F(0) complex subunit 8</fullName>
    </recommendedName>
    <alternativeName>
        <fullName>A6L</fullName>
    </alternativeName>
    <alternativeName>
        <fullName>F-ATPase subunit 8</fullName>
    </alternativeName>
</protein>
<feature type="chain" id="PRO_0000232864" description="ATP synthase F(0) complex subunit 8">
    <location>
        <begin position="1"/>
        <end position="66"/>
    </location>
</feature>
<feature type="transmembrane region" description="Helical" evidence="4">
    <location>
        <begin position="8"/>
        <end position="24"/>
    </location>
</feature>
<feature type="modified residue" description="N6-acetyllysine; alternate" evidence="2">
    <location>
        <position position="54"/>
    </location>
</feature>
<feature type="modified residue" description="N6-succinyllysine; alternate" evidence="2">
    <location>
        <position position="54"/>
    </location>
</feature>
<feature type="modified residue" description="N6-acetyllysine" evidence="2">
    <location>
        <position position="57"/>
    </location>
</feature>
<gene>
    <name evidence="1" type="primary">MT-ATP8</name>
    <name type="synonym">ATP8</name>
    <name type="synonym">ATPASE8</name>
    <name type="synonym">MTATP8</name>
</gene>
<keyword id="KW-0007">Acetylation</keyword>
<keyword id="KW-0066">ATP synthesis</keyword>
<keyword id="KW-0138">CF(0)</keyword>
<keyword id="KW-0375">Hydrogen ion transport</keyword>
<keyword id="KW-0406">Ion transport</keyword>
<keyword id="KW-0472">Membrane</keyword>
<keyword id="KW-0496">Mitochondrion</keyword>
<keyword id="KW-0812">Transmembrane</keyword>
<keyword id="KW-1133">Transmembrane helix</keyword>
<keyword id="KW-0813">Transport</keyword>
<proteinExistence type="inferred from homology"/>